<dbReference type="EC" id="2.7.7.7" evidence="1"/>
<dbReference type="EMBL" id="CP000682">
    <property type="protein sequence ID" value="ABP94773.1"/>
    <property type="molecule type" value="Genomic_DNA"/>
</dbReference>
<dbReference type="RefSeq" id="WP_012020560.1">
    <property type="nucleotide sequence ID" value="NC_009440.1"/>
</dbReference>
<dbReference type="SMR" id="A4YEC1"/>
<dbReference type="STRING" id="399549.Msed_0598"/>
<dbReference type="GeneID" id="91755049"/>
<dbReference type="KEGG" id="mse:Msed_0598"/>
<dbReference type="eggNOG" id="arCOG04582">
    <property type="taxonomic scope" value="Archaea"/>
</dbReference>
<dbReference type="HOGENOM" id="CLU_012348_1_2_2"/>
<dbReference type="Proteomes" id="UP000000242">
    <property type="component" value="Chromosome"/>
</dbReference>
<dbReference type="GO" id="GO:0005737">
    <property type="term" value="C:cytoplasm"/>
    <property type="evidence" value="ECO:0007669"/>
    <property type="project" value="UniProtKB-SubCell"/>
</dbReference>
<dbReference type="GO" id="GO:0003684">
    <property type="term" value="F:damaged DNA binding"/>
    <property type="evidence" value="ECO:0007669"/>
    <property type="project" value="InterPro"/>
</dbReference>
<dbReference type="GO" id="GO:0003887">
    <property type="term" value="F:DNA-directed DNA polymerase activity"/>
    <property type="evidence" value="ECO:0007669"/>
    <property type="project" value="UniProtKB-UniRule"/>
</dbReference>
<dbReference type="GO" id="GO:0000287">
    <property type="term" value="F:magnesium ion binding"/>
    <property type="evidence" value="ECO:0007669"/>
    <property type="project" value="UniProtKB-UniRule"/>
</dbReference>
<dbReference type="GO" id="GO:0006261">
    <property type="term" value="P:DNA-templated DNA replication"/>
    <property type="evidence" value="ECO:0007669"/>
    <property type="project" value="UniProtKB-UniRule"/>
</dbReference>
<dbReference type="GO" id="GO:0042276">
    <property type="term" value="P:error-prone translesion synthesis"/>
    <property type="evidence" value="ECO:0007669"/>
    <property type="project" value="TreeGrafter"/>
</dbReference>
<dbReference type="CDD" id="cd03586">
    <property type="entry name" value="PolY_Pol_IV_kappa"/>
    <property type="match status" value="1"/>
</dbReference>
<dbReference type="FunFam" id="3.40.1170.60:FF:000009">
    <property type="entry name" value="DNA polymerase IV"/>
    <property type="match status" value="1"/>
</dbReference>
<dbReference type="Gene3D" id="3.30.70.270">
    <property type="match status" value="2"/>
</dbReference>
<dbReference type="Gene3D" id="3.40.1170.60">
    <property type="match status" value="1"/>
</dbReference>
<dbReference type="Gene3D" id="1.10.150.20">
    <property type="entry name" value="5' to 3' exonuclease, C-terminal subdomain"/>
    <property type="match status" value="1"/>
</dbReference>
<dbReference type="Gene3D" id="3.30.1490.100">
    <property type="entry name" value="DNA polymerase, Y-family, little finger domain"/>
    <property type="match status" value="1"/>
</dbReference>
<dbReference type="HAMAP" id="MF_01113">
    <property type="entry name" value="DNApol_IV"/>
    <property type="match status" value="1"/>
</dbReference>
<dbReference type="InterPro" id="IPR043502">
    <property type="entry name" value="DNA/RNA_pol_sf"/>
</dbReference>
<dbReference type="InterPro" id="IPR036775">
    <property type="entry name" value="DNA_pol_Y-fam_lit_finger_sf"/>
</dbReference>
<dbReference type="InterPro" id="IPR050116">
    <property type="entry name" value="DNA_polymerase-Y"/>
</dbReference>
<dbReference type="InterPro" id="IPR022880">
    <property type="entry name" value="DNApol_IV"/>
</dbReference>
<dbReference type="InterPro" id="IPR024728">
    <property type="entry name" value="PolY_HhH_motif"/>
</dbReference>
<dbReference type="InterPro" id="IPR043128">
    <property type="entry name" value="Rev_trsase/Diguanyl_cyclase"/>
</dbReference>
<dbReference type="InterPro" id="IPR001126">
    <property type="entry name" value="UmuC"/>
</dbReference>
<dbReference type="NCBIfam" id="NF002292">
    <property type="entry name" value="PRK01216.1"/>
    <property type="match status" value="1"/>
</dbReference>
<dbReference type="PANTHER" id="PTHR11076:SF33">
    <property type="entry name" value="DNA POLYMERASE KAPPA"/>
    <property type="match status" value="1"/>
</dbReference>
<dbReference type="PANTHER" id="PTHR11076">
    <property type="entry name" value="DNA REPAIR POLYMERASE UMUC / TRANSFERASE FAMILY MEMBER"/>
    <property type="match status" value="1"/>
</dbReference>
<dbReference type="Pfam" id="PF00817">
    <property type="entry name" value="IMS"/>
    <property type="match status" value="1"/>
</dbReference>
<dbReference type="Pfam" id="PF11798">
    <property type="entry name" value="IMS_HHH"/>
    <property type="match status" value="1"/>
</dbReference>
<dbReference type="SUPFAM" id="SSF56672">
    <property type="entry name" value="DNA/RNA polymerases"/>
    <property type="match status" value="1"/>
</dbReference>
<dbReference type="SUPFAM" id="SSF100879">
    <property type="entry name" value="Lesion bypass DNA polymerase (Y-family), little finger domain"/>
    <property type="match status" value="1"/>
</dbReference>
<dbReference type="PROSITE" id="PS50173">
    <property type="entry name" value="UMUC"/>
    <property type="match status" value="1"/>
</dbReference>
<name>DPO4_METS5</name>
<protein>
    <recommendedName>
        <fullName evidence="1">DNA polymerase IV</fullName>
        <shortName evidence="1">Pol IV</shortName>
        <ecNumber evidence="1">2.7.7.7</ecNumber>
    </recommendedName>
</protein>
<sequence length="349" mass="39189">MIVLFVDFDYFFAQVEEILNPSLKGKPVVVCVYSGRTKDSGAVATSNYEARKLGIKAGMPIIKAKEIGKDAVFLPMRKEVYQQVSRRVMNIISGYGDKLEIASIDEAYLDITRRVKDFDEAKELARKLKAEVLEKERLRVTVGIGPNKVVAKIIADMNKPDGLGIIYPEEVKDFLYNLDISKVPGVGKITEEILRKVGINRLGDVINKSGELVNLVGKSKANYLLSLANNTYHDPVESREITHRGRYVTLPENTRDLNRILPSLKRSIEEAYSKVDGIPMEIYVVAIMEDLDIVSKGKSFKFGVSQDRALSVAQELLNKILESDKRKLRRVGVRLGKITKSSTLEDFLH</sequence>
<feature type="chain" id="PRO_1000084902" description="DNA polymerase IV">
    <location>
        <begin position="1"/>
        <end position="349"/>
    </location>
</feature>
<feature type="domain" description="UmuC" evidence="1">
    <location>
        <begin position="3"/>
        <end position="187"/>
    </location>
</feature>
<feature type="active site" evidence="1">
    <location>
        <position position="106"/>
    </location>
</feature>
<feature type="binding site" evidence="1">
    <location>
        <position position="7"/>
    </location>
    <ligand>
        <name>Mg(2+)</name>
        <dbReference type="ChEBI" id="CHEBI:18420"/>
    </ligand>
</feature>
<feature type="binding site" evidence="1">
    <location>
        <position position="105"/>
    </location>
    <ligand>
        <name>Mg(2+)</name>
        <dbReference type="ChEBI" id="CHEBI:18420"/>
    </ligand>
</feature>
<feature type="site" description="Substrate discrimination" evidence="1">
    <location>
        <position position="12"/>
    </location>
</feature>
<organism>
    <name type="scientific">Metallosphaera sedula (strain ATCC 51363 / DSM 5348 / JCM 9185 / NBRC 15509 / TH2)</name>
    <dbReference type="NCBI Taxonomy" id="399549"/>
    <lineage>
        <taxon>Archaea</taxon>
        <taxon>Thermoproteota</taxon>
        <taxon>Thermoprotei</taxon>
        <taxon>Sulfolobales</taxon>
        <taxon>Sulfolobaceae</taxon>
        <taxon>Metallosphaera</taxon>
    </lineage>
</organism>
<keyword id="KW-0963">Cytoplasm</keyword>
<keyword id="KW-0227">DNA damage</keyword>
<keyword id="KW-0234">DNA repair</keyword>
<keyword id="KW-0235">DNA replication</keyword>
<keyword id="KW-0238">DNA-binding</keyword>
<keyword id="KW-0239">DNA-directed DNA polymerase</keyword>
<keyword id="KW-0460">Magnesium</keyword>
<keyword id="KW-0479">Metal-binding</keyword>
<keyword id="KW-0515">Mutator protein</keyword>
<keyword id="KW-0548">Nucleotidyltransferase</keyword>
<keyword id="KW-1185">Reference proteome</keyword>
<keyword id="KW-0808">Transferase</keyword>
<comment type="function">
    <text evidence="1">Poorly processive, error-prone DNA polymerase involved in untargeted mutagenesis. Copies undamaged DNA at stalled replication forks, which arise in vivo from mismatched or misaligned primer ends. These misaligned primers can be extended by PolIV. Exhibits no 3'-5' exonuclease (proofreading) activity. May be involved in translesional synthesis.</text>
</comment>
<comment type="catalytic activity">
    <reaction evidence="1">
        <text>DNA(n) + a 2'-deoxyribonucleoside 5'-triphosphate = DNA(n+1) + diphosphate</text>
        <dbReference type="Rhea" id="RHEA:22508"/>
        <dbReference type="Rhea" id="RHEA-COMP:17339"/>
        <dbReference type="Rhea" id="RHEA-COMP:17340"/>
        <dbReference type="ChEBI" id="CHEBI:33019"/>
        <dbReference type="ChEBI" id="CHEBI:61560"/>
        <dbReference type="ChEBI" id="CHEBI:173112"/>
        <dbReference type="EC" id="2.7.7.7"/>
    </reaction>
</comment>
<comment type="cofactor">
    <cofactor evidence="1">
        <name>Mg(2+)</name>
        <dbReference type="ChEBI" id="CHEBI:18420"/>
    </cofactor>
    <text evidence="1">Binds 2 magnesium ions per subunit.</text>
</comment>
<comment type="subunit">
    <text evidence="1">Monomer.</text>
</comment>
<comment type="subcellular location">
    <subcellularLocation>
        <location evidence="1">Cytoplasm</location>
    </subcellularLocation>
</comment>
<comment type="similarity">
    <text evidence="1">Belongs to the DNA polymerase type-Y family.</text>
</comment>
<reference key="1">
    <citation type="journal article" date="2008" name="Appl. Environ. Microbiol.">
        <title>The genome sequence of the metal-mobilizing, extremely thermoacidophilic archaeon Metallosphaera sedula provides insights into bioleaching-associated metabolism.</title>
        <authorList>
            <person name="Auernik K.S."/>
            <person name="Maezato Y."/>
            <person name="Blum P.H."/>
            <person name="Kelly R.M."/>
        </authorList>
    </citation>
    <scope>NUCLEOTIDE SEQUENCE [LARGE SCALE GENOMIC DNA]</scope>
    <source>
        <strain>ATCC 51363 / DSM 5348 / JCM 9185 / NBRC 15509 / TH2</strain>
    </source>
</reference>
<gene>
    <name evidence="1" type="primary">dbh</name>
    <name type="ordered locus">Msed_0598</name>
</gene>
<accession>A4YEC1</accession>
<proteinExistence type="inferred from homology"/>
<evidence type="ECO:0000255" key="1">
    <source>
        <dbReference type="HAMAP-Rule" id="MF_01113"/>
    </source>
</evidence>